<feature type="signal peptide" evidence="2">
    <location>
        <begin position="1"/>
        <end position="15"/>
    </location>
</feature>
<feature type="chain" id="PRO_0000408904" description="Spike glycoprotein">
    <location>
        <begin position="16"/>
        <end position="1220"/>
    </location>
</feature>
<feature type="topological domain" description="Virion surface" evidence="2">
    <location>
        <begin position="16"/>
        <end position="1181"/>
    </location>
</feature>
<feature type="transmembrane region" description="Helical" evidence="2">
    <location>
        <begin position="1182"/>
        <end position="1202"/>
    </location>
</feature>
<feature type="topological domain" description="Intravirion" evidence="2">
    <location>
        <begin position="1203"/>
        <end position="1220"/>
    </location>
</feature>
<feature type="coiled-coil region" evidence="2">
    <location>
        <begin position="1118"/>
        <end position="1169"/>
    </location>
</feature>
<feature type="glycosylation site" description="N-linked (GlcNAc...) asparagine; by host" evidence="2">
    <location>
        <position position="60"/>
    </location>
</feature>
<feature type="glycosylation site" description="N-linked (GlcNAc...) asparagine; by host" evidence="2">
    <location>
        <position position="80"/>
    </location>
</feature>
<feature type="glycosylation site" description="N-linked (GlcNAc...) asparagine; by host" evidence="2">
    <location>
        <position position="111"/>
    </location>
</feature>
<feature type="glycosylation site" description="N-linked (GlcNAc...) asparagine; by host" evidence="2">
    <location>
        <position position="262"/>
    </location>
</feature>
<feature type="glycosylation site" description="N-linked (GlcNAc...) asparagine; by host" evidence="2">
    <location>
        <position position="403"/>
    </location>
</feature>
<feature type="glycosylation site" description="N-linked (GlcNAc...) asparagine; by host" evidence="2">
    <location>
        <position position="601"/>
    </location>
</feature>
<feature type="glycosylation site" description="N-linked (GlcNAc...) asparagine; by host" evidence="2">
    <location>
        <position position="644"/>
    </location>
</feature>
<feature type="glycosylation site" description="N-linked (GlcNAc...) asparagine; by host" evidence="2">
    <location>
        <position position="711"/>
    </location>
</feature>
<feature type="glycosylation site" description="N-linked (GlcNAc...) asparagine; by host" evidence="2">
    <location>
        <position position="774"/>
    </location>
</feature>
<feature type="glycosylation site" description="N-linked (GlcNAc...) asparagine; by host" evidence="2">
    <location>
        <position position="789"/>
    </location>
</feature>
<feature type="glycosylation site" description="N-linked (GlcNAc...) asparagine; by host" evidence="2">
    <location>
        <position position="1004"/>
    </location>
</feature>
<feature type="glycosylation site" description="N-linked (GlcNAc...) asparagine; by host" evidence="2">
    <location>
        <position position="1028"/>
    </location>
</feature>
<feature type="glycosylation site" description="N-linked (GlcNAc...) asparagine; by host" evidence="2">
    <location>
        <position position="1091"/>
    </location>
</feature>
<feature type="glycosylation site" description="N-linked (GlcNAc...) asparagine; by host" evidence="2">
    <location>
        <position position="1121"/>
    </location>
</feature>
<feature type="glycosylation site" description="N-linked (GlcNAc...) asparagine; by host" evidence="2">
    <location>
        <position position="1143"/>
    </location>
</feature>
<comment type="function">
    <text evidence="1">Mediates the binding of virions to the host cell receptor and is involved in membrane fusion.</text>
</comment>
<comment type="subunit">
    <text evidence="1">Homotrimer.</text>
</comment>
<comment type="subcellular location">
    <subcellularLocation>
        <location evidence="1">Virion membrane</location>
        <topology evidence="1">Single-pass type I membrane protein</topology>
    </subcellularLocation>
</comment>
<comment type="similarity">
    <text evidence="3">Belongs to the torovirinae spike protein family.</text>
</comment>
<reference key="1">
    <citation type="journal article" date="2006" name="J. Virol.">
        <title>Characterization of White bream virus reveals a novel genetic cluster of nidoviruses.</title>
        <authorList>
            <person name="Schuetze H."/>
            <person name="Ulferts R."/>
            <person name="Schelle B."/>
            <person name="Bayer S."/>
            <person name="Granzow H."/>
            <person name="Hoffmann B."/>
            <person name="Mettenleiter T.C."/>
            <person name="Ziebuhr J."/>
        </authorList>
    </citation>
    <scope>NUCLEOTIDE SEQUENCE [GENOMIC RNA]</scope>
</reference>
<name>SPIKE_WBV24</name>
<keyword id="KW-0175">Coiled coil</keyword>
<keyword id="KW-1168">Fusion of virus membrane with host membrane</keyword>
<keyword id="KW-0325">Glycoprotein</keyword>
<keyword id="KW-0945">Host-virus interaction</keyword>
<keyword id="KW-0472">Membrane</keyword>
<keyword id="KW-1185">Reference proteome</keyword>
<keyword id="KW-0732">Signal</keyword>
<keyword id="KW-0812">Transmembrane</keyword>
<keyword id="KW-1133">Transmembrane helix</keyword>
<keyword id="KW-1161">Viral attachment to host cell</keyword>
<keyword id="KW-0261">Viral envelope protein</keyword>
<keyword id="KW-1162">Viral penetration into host cytoplasm</keyword>
<keyword id="KW-0946">Virion</keyword>
<keyword id="KW-0843">Virulence</keyword>
<keyword id="KW-1160">Virus entry into host cell</keyword>
<accession>Q008X4</accession>
<gene>
    <name type="primary">S</name>
</gene>
<organismHost>
    <name type="scientific">Blicca bjoerkna</name>
    <name type="common">white bream</name>
    <dbReference type="NCBI Taxonomy" id="58317"/>
</organismHost>
<sequence>MWLITILATISCVTAQLSQTNPDCPIPTCTILPPPKTTLDNTKFRVVYTKDQEALIYATNFTSPFNNAQYPLPTLGNHLNRSYTLNYDKVFLNIADSPDMLNLKTSWTVVNNSNLCPLSPSVYRSTSPLQTLTTAEQYCFMTTATLTSAFLYDYTAMKPVGYIRARAEETISFFSIMKTNMVNRPTSPSLSQAHTHTLAAMRTTATGIQAQTFKPQTGFFIVLDASRARAVTNPLDTAIQPKFSPSFIKEVTFDHIFQTTINETARSVTRETTTGYIMNAAKTGALYKASPAYYLFLISSDCRLQQALSVPYDFSLGRFCPASMSCCLNKGYEQYYVNTWLFHYYNLKRLNVLNLESSPVSDHFIQLHRTFNTEHSMHCDGSPYASDTTYNIALLRDTVQFLNGTKTTTPLANEIPQLTDSLGYLKYQPDMVDASDHQNYMAYVTYLMAIFYPTFTEAQKFEFHNLLQSVCYFDKGSISRNQAYHSICHIISFQTTASVPYPIELQIPFTTEPTSGYNAYLVKTPIGSVAIGNQNPFDGEGVCFLTTCIYHPTKKINQKLTIPPVRWQVVPEGIAVVTGIPPNCLGYETYTQGSSFFTIYNDSKPCQPQTMQIAQARSVITTVYSAAQKSDIFVQPYGKSSWVNGSYQFDQFVGGALNLRTLTFTMRKPTQLYVLDPIEGTYIIPDYQTKFPLLTSGTQTYYYDPDQTVTNTTEVSKVTIDFSIRTMITLDPLVFNCEEFICDKDPTCRTQFSSYCQTTQPILAALKDAFEKYNRSIADYTSTIRALTNTTQDLFASATPVRYRRGVEVPLGYGHDLEQPSWVYDLGGTAIVPWIGTAVAVGKLANRVASIEATLYQITQGVKQSIQSTNDKFDKITNILHTHLRPVTEGLVRTNEQLNAFSKQVRDQFTMINTVTTELSAYVDQLQQVFTVGAFYQNQILQVISQLNSLQVYVDTLTSSFTDCISDLNQKILSPACITTHQLLQINKPSDNLGLKNVLTHYINGSAATFYHLTSTKGVYKPLPKLFNNTHFLAPTTAYNPVTGTCFFCGSNACDKSVTVDCDYQPQPLQSTILAVYPTPTGLDLLTITSNKTFEIKHGSTVVTSVAIPPPPILSSTININVTFQQQLLQLQEQVDQLNLQTNYTTTEIQSIIDKYNVEIQNALNQIVDFGPGTPSLALWKVILILIAVVVVIVIIATTIFCSVRKNQSELPLQVLSRLR</sequence>
<protein>
    <recommendedName>
        <fullName>Spike glycoprotein</fullName>
        <shortName>S glycoprotein</shortName>
    </recommendedName>
</protein>
<organism>
    <name type="scientific">White bream virus (isolate Blicca bjoerkna L./Germany/DF24/00)</name>
    <name type="common">WBV</name>
    <dbReference type="NCBI Taxonomy" id="766180"/>
    <lineage>
        <taxon>Viruses</taxon>
        <taxon>Riboviria</taxon>
        <taxon>Orthornavirae</taxon>
        <taxon>Pisuviricota</taxon>
        <taxon>Pisoniviricetes</taxon>
        <taxon>Nidovirales</taxon>
        <taxon>Tornidovirineae</taxon>
        <taxon>Tobaniviridae</taxon>
        <taxon>Piscanivirinae</taxon>
        <taxon>Bafinivirus</taxon>
        <taxon>Blicbavirus</taxon>
        <taxon>White bream virus</taxon>
    </lineage>
</organism>
<proteinExistence type="inferred from homology"/>
<evidence type="ECO:0000250" key="1"/>
<evidence type="ECO:0000255" key="2"/>
<evidence type="ECO:0000305" key="3"/>
<dbReference type="EMBL" id="DQ898157">
    <property type="protein sequence ID" value="ABI97395.1"/>
    <property type="molecule type" value="Genomic_RNA"/>
</dbReference>
<dbReference type="RefSeq" id="YP_803215.1">
    <property type="nucleotide sequence ID" value="NC_008516.1"/>
</dbReference>
<dbReference type="GlyCosmos" id="Q008X4">
    <property type="glycosylation" value="15 sites, No reported glycans"/>
</dbReference>
<dbReference type="GeneID" id="4443109"/>
<dbReference type="KEGG" id="vg:4443109"/>
<dbReference type="Proteomes" id="UP000000680">
    <property type="component" value="Segment"/>
</dbReference>
<dbReference type="GO" id="GO:0016020">
    <property type="term" value="C:membrane"/>
    <property type="evidence" value="ECO:0007669"/>
    <property type="project" value="UniProtKB-KW"/>
</dbReference>
<dbReference type="GO" id="GO:0019031">
    <property type="term" value="C:viral envelope"/>
    <property type="evidence" value="ECO:0007669"/>
    <property type="project" value="UniProtKB-KW"/>
</dbReference>
<dbReference type="GO" id="GO:0055036">
    <property type="term" value="C:virion membrane"/>
    <property type="evidence" value="ECO:0007669"/>
    <property type="project" value="UniProtKB-SubCell"/>
</dbReference>
<dbReference type="GO" id="GO:0039663">
    <property type="term" value="P:membrane fusion involved in viral entry into host cell"/>
    <property type="evidence" value="ECO:0007669"/>
    <property type="project" value="UniProtKB-KW"/>
</dbReference>
<dbReference type="GO" id="GO:0046718">
    <property type="term" value="P:symbiont entry into host cell"/>
    <property type="evidence" value="ECO:0007669"/>
    <property type="project" value="UniProtKB-KW"/>
</dbReference>
<dbReference type="GO" id="GO:0019062">
    <property type="term" value="P:virion attachment to host cell"/>
    <property type="evidence" value="ECO:0007669"/>
    <property type="project" value="UniProtKB-KW"/>
</dbReference>
<dbReference type="InterPro" id="IPR031412">
    <property type="entry name" value="S_torovirinae"/>
</dbReference>
<dbReference type="Pfam" id="PF17072">
    <property type="entry name" value="Spike_torovirin"/>
    <property type="match status" value="1"/>
</dbReference>